<reference key="1">
    <citation type="journal article" date="2002" name="Nature">
        <title>The genome sequence of Schizosaccharomyces pombe.</title>
        <authorList>
            <person name="Wood V."/>
            <person name="Gwilliam R."/>
            <person name="Rajandream M.A."/>
            <person name="Lyne M.H."/>
            <person name="Lyne R."/>
            <person name="Stewart A."/>
            <person name="Sgouros J.G."/>
            <person name="Peat N."/>
            <person name="Hayles J."/>
            <person name="Baker S.G."/>
            <person name="Basham D."/>
            <person name="Bowman S."/>
            <person name="Brooks K."/>
            <person name="Brown D."/>
            <person name="Brown S."/>
            <person name="Chillingworth T."/>
            <person name="Churcher C.M."/>
            <person name="Collins M."/>
            <person name="Connor R."/>
            <person name="Cronin A."/>
            <person name="Davis P."/>
            <person name="Feltwell T."/>
            <person name="Fraser A."/>
            <person name="Gentles S."/>
            <person name="Goble A."/>
            <person name="Hamlin N."/>
            <person name="Harris D.E."/>
            <person name="Hidalgo J."/>
            <person name="Hodgson G."/>
            <person name="Holroyd S."/>
            <person name="Hornsby T."/>
            <person name="Howarth S."/>
            <person name="Huckle E.J."/>
            <person name="Hunt S."/>
            <person name="Jagels K."/>
            <person name="James K.D."/>
            <person name="Jones L."/>
            <person name="Jones M."/>
            <person name="Leather S."/>
            <person name="McDonald S."/>
            <person name="McLean J."/>
            <person name="Mooney P."/>
            <person name="Moule S."/>
            <person name="Mungall K.L."/>
            <person name="Murphy L.D."/>
            <person name="Niblett D."/>
            <person name="Odell C."/>
            <person name="Oliver K."/>
            <person name="O'Neil S."/>
            <person name="Pearson D."/>
            <person name="Quail M.A."/>
            <person name="Rabbinowitsch E."/>
            <person name="Rutherford K.M."/>
            <person name="Rutter S."/>
            <person name="Saunders D."/>
            <person name="Seeger K."/>
            <person name="Sharp S."/>
            <person name="Skelton J."/>
            <person name="Simmonds M.N."/>
            <person name="Squares R."/>
            <person name="Squares S."/>
            <person name="Stevens K."/>
            <person name="Taylor K."/>
            <person name="Taylor R.G."/>
            <person name="Tivey A."/>
            <person name="Walsh S.V."/>
            <person name="Warren T."/>
            <person name="Whitehead S."/>
            <person name="Woodward J.R."/>
            <person name="Volckaert G."/>
            <person name="Aert R."/>
            <person name="Robben J."/>
            <person name="Grymonprez B."/>
            <person name="Weltjens I."/>
            <person name="Vanstreels E."/>
            <person name="Rieger M."/>
            <person name="Schaefer M."/>
            <person name="Mueller-Auer S."/>
            <person name="Gabel C."/>
            <person name="Fuchs M."/>
            <person name="Duesterhoeft A."/>
            <person name="Fritzc C."/>
            <person name="Holzer E."/>
            <person name="Moestl D."/>
            <person name="Hilbert H."/>
            <person name="Borzym K."/>
            <person name="Langer I."/>
            <person name="Beck A."/>
            <person name="Lehrach H."/>
            <person name="Reinhardt R."/>
            <person name="Pohl T.M."/>
            <person name="Eger P."/>
            <person name="Zimmermann W."/>
            <person name="Wedler H."/>
            <person name="Wambutt R."/>
            <person name="Purnelle B."/>
            <person name="Goffeau A."/>
            <person name="Cadieu E."/>
            <person name="Dreano S."/>
            <person name="Gloux S."/>
            <person name="Lelaure V."/>
            <person name="Mottier S."/>
            <person name="Galibert F."/>
            <person name="Aves S.J."/>
            <person name="Xiang Z."/>
            <person name="Hunt C."/>
            <person name="Moore K."/>
            <person name="Hurst S.M."/>
            <person name="Lucas M."/>
            <person name="Rochet M."/>
            <person name="Gaillardin C."/>
            <person name="Tallada V.A."/>
            <person name="Garzon A."/>
            <person name="Thode G."/>
            <person name="Daga R.R."/>
            <person name="Cruzado L."/>
            <person name="Jimenez J."/>
            <person name="Sanchez M."/>
            <person name="del Rey F."/>
            <person name="Benito J."/>
            <person name="Dominguez A."/>
            <person name="Revuelta J.L."/>
            <person name="Moreno S."/>
            <person name="Armstrong J."/>
            <person name="Forsburg S.L."/>
            <person name="Cerutti L."/>
            <person name="Lowe T."/>
            <person name="McCombie W.R."/>
            <person name="Paulsen I."/>
            <person name="Potashkin J."/>
            <person name="Shpakovski G.V."/>
            <person name="Ussery D."/>
            <person name="Barrell B.G."/>
            <person name="Nurse P."/>
        </authorList>
    </citation>
    <scope>NUCLEOTIDE SEQUENCE [LARGE SCALE GENOMIC DNA]</scope>
    <source>
        <strain>972 / ATCC 24843</strain>
    </source>
</reference>
<reference key="2">
    <citation type="journal article" date="2006" name="Nat. Biotechnol.">
        <title>ORFeome cloning and global analysis of protein localization in the fission yeast Schizosaccharomyces pombe.</title>
        <authorList>
            <person name="Matsuyama A."/>
            <person name="Arai R."/>
            <person name="Yashiroda Y."/>
            <person name="Shirai A."/>
            <person name="Kamata A."/>
            <person name="Sekido S."/>
            <person name="Kobayashi Y."/>
            <person name="Hashimoto A."/>
            <person name="Hamamoto M."/>
            <person name="Hiraoka Y."/>
            <person name="Horinouchi S."/>
            <person name="Yoshida M."/>
        </authorList>
    </citation>
    <scope>SUBCELLULAR LOCATION [LARGE SCALE ANALYSIS]</scope>
</reference>
<keyword id="KW-0256">Endoplasmic reticulum</keyword>
<keyword id="KW-0472">Membrane</keyword>
<keyword id="KW-1185">Reference proteome</keyword>
<keyword id="KW-0732">Signal</keyword>
<keyword id="KW-0808">Transferase</keyword>
<keyword id="KW-0812">Transmembrane</keyword>
<keyword id="KW-1133">Transmembrane helix</keyword>
<feature type="signal peptide" evidence="1">
    <location>
        <begin position="1"/>
        <end position="18"/>
    </location>
</feature>
<feature type="chain" id="PRO_0000372342" description="Uncharacterized protein C553.06">
    <location>
        <begin position="19"/>
        <end position="271"/>
    </location>
</feature>
<feature type="topological domain" description="Lumenal" evidence="1">
    <location>
        <begin position="19"/>
        <end position="187"/>
    </location>
</feature>
<feature type="transmembrane region" description="Helical" evidence="1">
    <location>
        <begin position="188"/>
        <end position="208"/>
    </location>
</feature>
<feature type="topological domain" description="Cytoplasmic" evidence="1">
    <location>
        <begin position="209"/>
        <end position="230"/>
    </location>
</feature>
<feature type="transmembrane region" description="Helical" evidence="1">
    <location>
        <begin position="231"/>
        <end position="251"/>
    </location>
</feature>
<feature type="topological domain" description="Lumenal" evidence="1">
    <location>
        <begin position="252"/>
        <end position="271"/>
    </location>
</feature>
<proteinExistence type="inferred from homology"/>
<protein>
    <recommendedName>
        <fullName>Uncharacterized protein C553.06</fullName>
    </recommendedName>
</protein>
<name>YJB6_SCHPO</name>
<comment type="subcellular location">
    <subcellularLocation>
        <location evidence="2">Endoplasmic reticulum membrane</location>
        <topology evidence="2">Multi-pass membrane protein</topology>
    </subcellularLocation>
</comment>
<organism>
    <name type="scientific">Schizosaccharomyces pombe (strain 972 / ATCC 24843)</name>
    <name type="common">Fission yeast</name>
    <dbReference type="NCBI Taxonomy" id="284812"/>
    <lineage>
        <taxon>Eukaryota</taxon>
        <taxon>Fungi</taxon>
        <taxon>Dikarya</taxon>
        <taxon>Ascomycota</taxon>
        <taxon>Taphrinomycotina</taxon>
        <taxon>Schizosaccharomycetes</taxon>
        <taxon>Schizosaccharomycetales</taxon>
        <taxon>Schizosaccharomycetaceae</taxon>
        <taxon>Schizosaccharomyces</taxon>
    </lineage>
</organism>
<evidence type="ECO:0000255" key="1"/>
<evidence type="ECO:0000269" key="2">
    <source>
    </source>
</evidence>
<gene>
    <name type="ORF">SPCC553.06</name>
</gene>
<dbReference type="EMBL" id="CU329672">
    <property type="protein sequence ID" value="CAA19258.1"/>
    <property type="molecule type" value="Genomic_DNA"/>
</dbReference>
<dbReference type="PIR" id="T41398">
    <property type="entry name" value="T41398"/>
</dbReference>
<dbReference type="SMR" id="O74943"/>
<dbReference type="BioGRID" id="275835">
    <property type="interactions" value="4"/>
</dbReference>
<dbReference type="ComplexPortal" id="CPX-10061">
    <property type="entry name" value="Oligosaccharyltransferase complex"/>
</dbReference>
<dbReference type="FunCoup" id="O74943">
    <property type="interactions" value="62"/>
</dbReference>
<dbReference type="STRING" id="284812.O74943"/>
<dbReference type="iPTMnet" id="O74943"/>
<dbReference type="PaxDb" id="4896-SPCC553.06.1"/>
<dbReference type="EnsemblFungi" id="SPCC553.06.1">
    <property type="protein sequence ID" value="SPCC553.06.1:pep"/>
    <property type="gene ID" value="SPCC553.06"/>
</dbReference>
<dbReference type="KEGG" id="spo:2539265"/>
<dbReference type="PomBase" id="SPCC553.06"/>
<dbReference type="VEuPathDB" id="FungiDB:SPCC553.06"/>
<dbReference type="eggNOG" id="KOG2447">
    <property type="taxonomic scope" value="Eukaryota"/>
</dbReference>
<dbReference type="HOGENOM" id="CLU_1019988_0_0_1"/>
<dbReference type="InParanoid" id="O74943"/>
<dbReference type="OMA" id="QFTCAID"/>
<dbReference type="PhylomeDB" id="O74943"/>
<dbReference type="PRO" id="PR:O74943"/>
<dbReference type="Proteomes" id="UP000002485">
    <property type="component" value="Chromosome III"/>
</dbReference>
<dbReference type="GO" id="GO:0005783">
    <property type="term" value="C:endoplasmic reticulum"/>
    <property type="evidence" value="ECO:0007005"/>
    <property type="project" value="PomBase"/>
</dbReference>
<dbReference type="GO" id="GO:0008250">
    <property type="term" value="C:oligosaccharyltransferase complex"/>
    <property type="evidence" value="ECO:0000266"/>
    <property type="project" value="PomBase"/>
</dbReference>
<dbReference type="GO" id="GO:0016740">
    <property type="term" value="F:transferase activity"/>
    <property type="evidence" value="ECO:0007669"/>
    <property type="project" value="UniProtKB-KW"/>
</dbReference>
<dbReference type="InterPro" id="IPR056790">
    <property type="entry name" value="Ribophorin_II_C"/>
</dbReference>
<dbReference type="InterPro" id="IPR008814">
    <property type="entry name" value="Swp1"/>
</dbReference>
<dbReference type="PANTHER" id="PTHR12640:SF0">
    <property type="entry name" value="DOLICHYL-DIPHOSPHOOLIGOSACCHARIDE--PROTEIN GLYCOSYLTRANSFERASE SUBUNIT 2"/>
    <property type="match status" value="1"/>
</dbReference>
<dbReference type="PANTHER" id="PTHR12640">
    <property type="entry name" value="RIBOPHORIN II"/>
    <property type="match status" value="1"/>
</dbReference>
<dbReference type="Pfam" id="PF25147">
    <property type="entry name" value="Ribophorin_II_C"/>
    <property type="match status" value="1"/>
</dbReference>
<sequence>MKGFFLIAGFLLFARALCASWNVEEGTLQLSSQDLESENAYDLKFSQIQSSTVYELTGDETLNLKFTCILNGTGAIPHQAHLLLSDTEHPTLAVIYPASVSQGGVASLELRLFDIPTSLLRSDSTLTAKLLVASFGETIPFSLPLGQLSINVPPSLYHKAEFSPLDELSPKEVILHTFSPPPKRANYFLSICFSVSVVVSLIGLLGVWQKLLPKSNVYSVSSSSFARTFGFASLAVAEILLFIYWTSLSIFQFGAYAAGVAIMCGIAAKSL</sequence>
<accession>O74943</accession>